<comment type="function">
    <text>This enzyme is an effector of chloramphenicol resistance in bacteria.</text>
</comment>
<comment type="catalytic activity">
    <reaction evidence="1">
        <text>chloramphenicol + acetyl-CoA = chloramphenicol 3-acetate + CoA</text>
        <dbReference type="Rhea" id="RHEA:18421"/>
        <dbReference type="ChEBI" id="CHEBI:16730"/>
        <dbReference type="ChEBI" id="CHEBI:17698"/>
        <dbReference type="ChEBI" id="CHEBI:57287"/>
        <dbReference type="ChEBI" id="CHEBI:57288"/>
        <dbReference type="EC" id="2.3.1.28"/>
    </reaction>
</comment>
<comment type="subunit">
    <text>Homotrimer.</text>
</comment>
<comment type="similarity">
    <text evidence="2">Belongs to the chloramphenicol acetyltransferase family.</text>
</comment>
<organism>
    <name type="scientific">Proteus mirabilis</name>
    <dbReference type="NCBI Taxonomy" id="584"/>
    <lineage>
        <taxon>Bacteria</taxon>
        <taxon>Pseudomonadati</taxon>
        <taxon>Pseudomonadota</taxon>
        <taxon>Gammaproteobacteria</taxon>
        <taxon>Enterobacterales</taxon>
        <taxon>Morganellaceae</taxon>
        <taxon>Proteus</taxon>
    </lineage>
</organism>
<keyword id="KW-0012">Acyltransferase</keyword>
<keyword id="KW-0046">Antibiotic resistance</keyword>
<keyword id="KW-0808">Transferase</keyword>
<name>CAT_PROMI</name>
<sequence>MDTKRVGILVVDLSQWGRKEHFEAFQSFAQCTFSQTVQLDITSLLKTVKQNGYKFYPTFIYIISLLVNKHAEFRMAMKDGELVIWDSVNPGYNIFHEQTETFSSLWSYYHKDINRFLKTYSEDIAQYGDDLAYFPKEFIENMFFVSANPWVSFTSFNLNMANINNFFAPVFTIGKYYTQGDKVLMPLAIQVHHAVCDGFHVGRLLNEIQQYCDEGCK</sequence>
<gene>
    <name type="primary">cat</name>
</gene>
<evidence type="ECO:0000255" key="1">
    <source>
        <dbReference type="PROSITE-ProRule" id="PRU10021"/>
    </source>
</evidence>
<evidence type="ECO:0000305" key="2"/>
<protein>
    <recommendedName>
        <fullName>Chloramphenicol acetyltransferase</fullName>
        <shortName>CAT</shortName>
        <ecNumber>2.3.1.28</ecNumber>
    </recommendedName>
</protein>
<reference key="1">
    <citation type="journal article" date="1985" name="J. Bacteriol.">
        <title>Nucleotide sequence analysis of the cat gene of Proteus mirabilis: comparison with the type I (Tn9) cat gene.</title>
        <authorList>
            <person name="Charles I.G."/>
            <person name="Keyte J.W."/>
            <person name="Shaw W.V."/>
        </authorList>
    </citation>
    <scope>NUCLEOTIDE SEQUENCE [GENOMIC DNA]</scope>
    <source>
        <strain>PM13</strain>
    </source>
</reference>
<dbReference type="EC" id="2.3.1.28"/>
<dbReference type="EMBL" id="M11587">
    <property type="protein sequence ID" value="AAA25655.1"/>
    <property type="molecule type" value="Genomic_DNA"/>
</dbReference>
<dbReference type="PIR" id="A24651">
    <property type="entry name" value="A24651"/>
</dbReference>
<dbReference type="RefSeq" id="WP_063843208.1">
    <property type="nucleotide sequence ID" value="NG_047569.1"/>
</dbReference>
<dbReference type="SMR" id="P07641"/>
<dbReference type="STRING" id="584.AOUC001_12155"/>
<dbReference type="CARD" id="ARO:3004657">
    <property type="molecule name" value="catA4"/>
    <property type="mechanism identifier" value="ARO:0001004"/>
    <property type="mechanism name" value="antibiotic inactivation"/>
</dbReference>
<dbReference type="KEGG" id="ag:AAA25655"/>
<dbReference type="GO" id="GO:0008811">
    <property type="term" value="F:chloramphenicol O-acetyltransferase activity"/>
    <property type="evidence" value="ECO:0007669"/>
    <property type="project" value="UniProtKB-EC"/>
</dbReference>
<dbReference type="GO" id="GO:0046677">
    <property type="term" value="P:response to antibiotic"/>
    <property type="evidence" value="ECO:0007669"/>
    <property type="project" value="UniProtKB-KW"/>
</dbReference>
<dbReference type="Gene3D" id="3.30.559.10">
    <property type="entry name" value="Chloramphenicol acetyltransferase-like domain"/>
    <property type="match status" value="1"/>
</dbReference>
<dbReference type="InterPro" id="IPR023213">
    <property type="entry name" value="CAT-like_dom_sf"/>
</dbReference>
<dbReference type="InterPro" id="IPR018372">
    <property type="entry name" value="Chloramphenicol_AcTrfase_AS"/>
</dbReference>
<dbReference type="InterPro" id="IPR001707">
    <property type="entry name" value="Cmp_AcTrfase"/>
</dbReference>
<dbReference type="NCBIfam" id="NF000491">
    <property type="entry name" value="chloram_CatA"/>
    <property type="match status" value="1"/>
</dbReference>
<dbReference type="PANTHER" id="PTHR38474:SF2">
    <property type="entry name" value="CHLORAMPHENICOL ACETYLTRANSFERASE"/>
    <property type="match status" value="1"/>
</dbReference>
<dbReference type="PANTHER" id="PTHR38474">
    <property type="entry name" value="SLR0299 PROTEIN"/>
    <property type="match status" value="1"/>
</dbReference>
<dbReference type="Pfam" id="PF00302">
    <property type="entry name" value="CAT"/>
    <property type="match status" value="1"/>
</dbReference>
<dbReference type="PIRSF" id="PIRSF000440">
    <property type="entry name" value="CAT"/>
    <property type="match status" value="1"/>
</dbReference>
<dbReference type="SMART" id="SM01059">
    <property type="entry name" value="CAT"/>
    <property type="match status" value="1"/>
</dbReference>
<dbReference type="SUPFAM" id="SSF52777">
    <property type="entry name" value="CoA-dependent acyltransferases"/>
    <property type="match status" value="1"/>
</dbReference>
<dbReference type="PROSITE" id="PS00100">
    <property type="entry name" value="CAT"/>
    <property type="match status" value="1"/>
</dbReference>
<accession>P07641</accession>
<feature type="chain" id="PRO_0000165868" description="Chloramphenicol acetyltransferase">
    <location>
        <begin position="1"/>
        <end position="217"/>
    </location>
</feature>
<feature type="active site" description="Proton acceptor" evidence="1">
    <location>
        <position position="193"/>
    </location>
</feature>
<proteinExistence type="inferred from homology"/>